<protein>
    <recommendedName>
        <fullName>Transmembrane protein 14A</fullName>
    </recommendedName>
</protein>
<comment type="function">
    <text evidence="2">Inhibits apoptosis via negative regulation of the mitochondrial outer membrane permeabilization involved in apoptotic signaling pathway.</text>
</comment>
<comment type="interaction">
    <interactant intactId="EBI-2800360">
        <id>Q9Y6G1</id>
    </interactant>
    <interactant intactId="EBI-13059134">
        <id>Q13520</id>
        <label>AQP6</label>
    </interactant>
    <organismsDiffer>false</organismsDiffer>
    <experiments>3</experiments>
</comment>
<comment type="interaction">
    <interactant intactId="EBI-2800360">
        <id>Q9Y6G1</id>
    </interactant>
    <interactant intactId="EBI-18013275">
        <id>Q7Z7G2</id>
        <label>CPLX4</label>
    </interactant>
    <organismsDiffer>false</organismsDiffer>
    <experiments>3</experiments>
</comment>
<comment type="interaction">
    <interactant intactId="EBI-2800360">
        <id>Q9Y6G1</id>
    </interactant>
    <interactant intactId="EBI-6942903">
        <id>Q96BA8</id>
        <label>CREB3L1</label>
    </interactant>
    <organismsDiffer>false</organismsDiffer>
    <experiments>5</experiments>
</comment>
<comment type="interaction">
    <interactant intactId="EBI-2800360">
        <id>Q9Y6G1</id>
    </interactant>
    <interactant intactId="EBI-12836456">
        <id>P49682</id>
        <label>CXCR3</label>
    </interactant>
    <organismsDiffer>false</organismsDiffer>
    <experiments>3</experiments>
</comment>
<comment type="interaction">
    <interactant intactId="EBI-2800360">
        <id>Q9Y6G1</id>
    </interactant>
    <interactant intactId="EBI-781551">
        <id>Q9Y282</id>
        <label>ERGIC3</label>
    </interactant>
    <organismsDiffer>false</organismsDiffer>
    <experiments>3</experiments>
</comment>
<comment type="interaction">
    <interactant intactId="EBI-2800360">
        <id>Q9Y6G1</id>
    </interactant>
    <interactant intactId="EBI-13361852">
        <id>Q96PL5</id>
        <label>ERMAP</label>
    </interactant>
    <organismsDiffer>false</organismsDiffer>
    <experiments>3</experiments>
</comment>
<comment type="interaction">
    <interactant intactId="EBI-2800360">
        <id>Q9Y6G1</id>
    </interactant>
    <interactant intactId="EBI-725665">
        <id>Q9Y5U9</id>
        <label>IER3IP1</label>
    </interactant>
    <organismsDiffer>false</organismsDiffer>
    <experiments>3</experiments>
</comment>
<comment type="interaction">
    <interactant intactId="EBI-2800360">
        <id>Q9Y6G1</id>
    </interactant>
    <interactant intactId="EBI-3934936">
        <id>O95279</id>
        <label>KCNK5</label>
    </interactant>
    <organismsDiffer>false</organismsDiffer>
    <experiments>3</experiments>
</comment>
<comment type="interaction">
    <interactant intactId="EBI-2800360">
        <id>Q9Y6G1</id>
    </interactant>
    <interactant intactId="EBI-12082218">
        <id>Q9Y2L9-3</id>
        <label>LRCH1</label>
    </interactant>
    <organismsDiffer>false</organismsDiffer>
    <experiments>3</experiments>
</comment>
<comment type="interaction">
    <interactant intactId="EBI-2800360">
        <id>Q9Y6G1</id>
    </interactant>
    <interactant intactId="EBI-1044504">
        <id>Q9BS40</id>
        <label>LXN</label>
    </interactant>
    <organismsDiffer>false</organismsDiffer>
    <experiments>3</experiments>
</comment>
<comment type="interaction">
    <interactant intactId="EBI-2800360">
        <id>Q9Y6G1</id>
    </interactant>
    <interactant intactId="EBI-6163737">
        <id>Q8N4V1</id>
        <label>MMGT1</label>
    </interactant>
    <organismsDiffer>false</organismsDiffer>
    <experiments>3</experiments>
</comment>
<comment type="interaction">
    <interactant intactId="EBI-2800360">
        <id>Q9Y6G1</id>
    </interactant>
    <interactant intactId="EBI-17263240">
        <id>P15941-11</id>
        <label>MUC1</label>
    </interactant>
    <organismsDiffer>false</organismsDiffer>
    <experiments>3</experiments>
</comment>
<comment type="interaction">
    <interactant intactId="EBI-2800360">
        <id>Q9Y6G1</id>
    </interactant>
    <interactant intactId="EBI-10969203">
        <id>O14524-2</id>
        <label>NEMP1</label>
    </interactant>
    <organismsDiffer>false</organismsDiffer>
    <experiments>3</experiments>
</comment>
<comment type="interaction">
    <interactant intactId="EBI-2800360">
        <id>Q9Y6G1</id>
    </interactant>
    <interactant intactId="EBI-716063">
        <id>Q13113</id>
        <label>PDZK1IP1</label>
    </interactant>
    <organismsDiffer>false</organismsDiffer>
    <experiments>3</experiments>
</comment>
<comment type="interaction">
    <interactant intactId="EBI-2800360">
        <id>Q9Y6G1</id>
    </interactant>
    <interactant intactId="EBI-17247926">
        <id>Q9NY72</id>
        <label>SCN3B</label>
    </interactant>
    <organismsDiffer>false</organismsDiffer>
    <experiments>3</experiments>
</comment>
<comment type="interaction">
    <interactant intactId="EBI-2800360">
        <id>Q9Y6G1</id>
    </interactant>
    <interactant intactId="EBI-18159983">
        <id>Q3KNW5</id>
        <label>SLC10A6</label>
    </interactant>
    <organismsDiffer>false</organismsDiffer>
    <experiments>3</experiments>
</comment>
<comment type="interaction">
    <interactant intactId="EBI-2800360">
        <id>Q9Y6G1</id>
    </interactant>
    <interactant intactId="EBI-17595455">
        <id>P54219-3</id>
        <label>SLC18A1</label>
    </interactant>
    <organismsDiffer>false</organismsDiffer>
    <experiments>3</experiments>
</comment>
<comment type="interaction">
    <interactant intactId="EBI-2800360">
        <id>Q9Y6G1</id>
    </interactant>
    <interactant intactId="EBI-3923779">
        <id>Q9BZV2</id>
        <label>SLC19A3</label>
    </interactant>
    <organismsDiffer>false</organismsDiffer>
    <experiments>3</experiments>
</comment>
<comment type="interaction">
    <interactant intactId="EBI-2800360">
        <id>Q9Y6G1</id>
    </interactant>
    <interactant intactId="EBI-4289564">
        <id>P30825</id>
        <label>SLC7A1</label>
    </interactant>
    <organismsDiffer>false</organismsDiffer>
    <experiments>3</experiments>
</comment>
<comment type="interaction">
    <interactant intactId="EBI-2800360">
        <id>Q9Y6G1</id>
    </interactant>
    <interactant intactId="EBI-17280858">
        <id>Q8WWF3</id>
        <label>SSMEM1</label>
    </interactant>
    <organismsDiffer>false</organismsDiffer>
    <experiments>3</experiments>
</comment>
<comment type="interaction">
    <interactant intactId="EBI-2800360">
        <id>Q9Y6G1</id>
    </interactant>
    <interactant intactId="EBI-8638294">
        <id>Q9NUH8</id>
        <label>TMEM14B</label>
    </interactant>
    <organismsDiffer>false</organismsDiffer>
    <experiments>3</experiments>
</comment>
<comment type="interaction">
    <interactant intactId="EBI-2800360">
        <id>Q9Y6G1</id>
    </interactant>
    <interactant intactId="EBI-11724423">
        <id>Q7Z7N9</id>
        <label>TMEM179B</label>
    </interactant>
    <organismsDiffer>false</organismsDiffer>
    <experiments>3</experiments>
</comment>
<comment type="interaction">
    <interactant intactId="EBI-2800360">
        <id>Q9Y6G1</id>
    </interactant>
    <interactant intactId="EBI-726044">
        <id>Q9NW97</id>
        <label>TMEM51</label>
    </interactant>
    <organismsDiffer>false</organismsDiffer>
    <experiments>3</experiments>
</comment>
<comment type="interaction">
    <interactant intactId="EBI-2800360">
        <id>Q9Y6G1</id>
    </interactant>
    <interactant intactId="EBI-11742770">
        <id>Q96HE8</id>
        <label>TMEM80</label>
    </interactant>
    <organismsDiffer>false</organismsDiffer>
    <experiments>3</experiments>
</comment>
<comment type="interaction">
    <interactant intactId="EBI-2800360">
        <id>Q9Y6G1</id>
    </interactant>
    <interactant intactId="EBI-2548832">
        <id>Q8N661</id>
        <label>TMEM86B</label>
    </interactant>
    <organismsDiffer>false</organismsDiffer>
    <experiments>3</experiments>
</comment>
<comment type="subcellular location">
    <subcellularLocation>
        <location evidence="2">Mitochondrion membrane</location>
        <topology evidence="1">Multi-pass membrane protein</topology>
    </subcellularLocation>
    <subcellularLocation>
        <location evidence="2">Endoplasmic reticulum membrane</location>
    </subcellularLocation>
</comment>
<comment type="tissue specificity">
    <text evidence="3">Expressed at significantly higher levels in ovarian cancer tissues than in normal tissues (at protein level).</text>
</comment>
<comment type="similarity">
    <text evidence="4">Belongs to the TMEM14 family.</text>
</comment>
<keyword id="KW-0002">3D-structure</keyword>
<keyword id="KW-0053">Apoptosis</keyword>
<keyword id="KW-0256">Endoplasmic reticulum</keyword>
<keyword id="KW-0472">Membrane</keyword>
<keyword id="KW-0496">Mitochondrion</keyword>
<keyword id="KW-1267">Proteomics identification</keyword>
<keyword id="KW-1185">Reference proteome</keyword>
<keyword id="KW-0812">Transmembrane</keyword>
<keyword id="KW-1133">Transmembrane helix</keyword>
<proteinExistence type="evidence at protein level"/>
<feature type="chain" id="PRO_0000221169" description="Transmembrane protein 14A">
    <location>
        <begin position="1"/>
        <end position="99"/>
    </location>
</feature>
<feature type="transmembrane region" description="Helical" evidence="1">
    <location>
        <begin position="1"/>
        <end position="21"/>
    </location>
</feature>
<feature type="transmembrane region" description="Helical" evidence="1">
    <location>
        <begin position="24"/>
        <end position="44"/>
    </location>
</feature>
<feature type="transmembrane region" description="Helical" evidence="1">
    <location>
        <begin position="79"/>
        <end position="99"/>
    </location>
</feature>
<feature type="sequence variant" id="VAR_052497" description="In dbSNP:rs11543266.">
    <original>C</original>
    <variation>R</variation>
    <location>
        <position position="37"/>
    </location>
</feature>
<feature type="helix" evidence="5">
    <location>
        <begin position="6"/>
        <end position="19"/>
    </location>
</feature>
<feature type="helix" evidence="5">
    <location>
        <begin position="29"/>
        <end position="46"/>
    </location>
</feature>
<feature type="strand" evidence="6">
    <location>
        <begin position="47"/>
        <end position="49"/>
    </location>
</feature>
<feature type="helix" evidence="5">
    <location>
        <begin position="54"/>
        <end position="67"/>
    </location>
</feature>
<feature type="strand" evidence="5">
    <location>
        <begin position="73"/>
        <end position="80"/>
    </location>
</feature>
<feature type="helix" evidence="5">
    <location>
        <begin position="81"/>
        <end position="94"/>
    </location>
</feature>
<organism>
    <name type="scientific">Homo sapiens</name>
    <name type="common">Human</name>
    <dbReference type="NCBI Taxonomy" id="9606"/>
    <lineage>
        <taxon>Eukaryota</taxon>
        <taxon>Metazoa</taxon>
        <taxon>Chordata</taxon>
        <taxon>Craniata</taxon>
        <taxon>Vertebrata</taxon>
        <taxon>Euteleostomi</taxon>
        <taxon>Mammalia</taxon>
        <taxon>Eutheria</taxon>
        <taxon>Euarchontoglires</taxon>
        <taxon>Primates</taxon>
        <taxon>Haplorrhini</taxon>
        <taxon>Catarrhini</taxon>
        <taxon>Hominidae</taxon>
        <taxon>Homo</taxon>
    </lineage>
</organism>
<dbReference type="EMBL" id="AF078864">
    <property type="protein sequence ID" value="AAD44496.1"/>
    <property type="molecule type" value="mRNA"/>
</dbReference>
<dbReference type="EMBL" id="AF239771">
    <property type="protein sequence ID" value="AAF59948.1"/>
    <property type="molecule type" value="mRNA"/>
</dbReference>
<dbReference type="EMBL" id="AK312063">
    <property type="protein sequence ID" value="BAG34999.1"/>
    <property type="molecule type" value="mRNA"/>
</dbReference>
<dbReference type="EMBL" id="AL109918">
    <property type="status" value="NOT_ANNOTATED_CDS"/>
    <property type="molecule type" value="Genomic_DNA"/>
</dbReference>
<dbReference type="EMBL" id="CH471081">
    <property type="protein sequence ID" value="EAX04380.1"/>
    <property type="molecule type" value="Genomic_DNA"/>
</dbReference>
<dbReference type="EMBL" id="BC015097">
    <property type="protein sequence ID" value="AAH15097.1"/>
    <property type="molecule type" value="mRNA"/>
</dbReference>
<dbReference type="EMBL" id="BC019328">
    <property type="protein sequence ID" value="AAH19328.1"/>
    <property type="molecule type" value="mRNA"/>
</dbReference>
<dbReference type="CCDS" id="CCDS4943.1"/>
<dbReference type="RefSeq" id="NP_054770.1">
    <property type="nucleotide sequence ID" value="NM_014051.4"/>
</dbReference>
<dbReference type="PDB" id="2LOO">
    <property type="method" value="NMR"/>
    <property type="chains" value="A=1-99"/>
</dbReference>
<dbReference type="PDB" id="2LOP">
    <property type="method" value="NMR"/>
    <property type="chains" value="A=1-99"/>
</dbReference>
<dbReference type="PDBsum" id="2LOO"/>
<dbReference type="PDBsum" id="2LOP"/>
<dbReference type="BMRB" id="Q9Y6G1"/>
<dbReference type="SMR" id="Q9Y6G1"/>
<dbReference type="BioGRID" id="118801">
    <property type="interactions" value="41"/>
</dbReference>
<dbReference type="FunCoup" id="Q9Y6G1">
    <property type="interactions" value="331"/>
</dbReference>
<dbReference type="IntAct" id="Q9Y6G1">
    <property type="interactions" value="34"/>
</dbReference>
<dbReference type="MINT" id="Q9Y6G1"/>
<dbReference type="STRING" id="9606.ENSP00000211314"/>
<dbReference type="TCDB" id="2.A.126.1.19">
    <property type="family name" value="the fatty acid exporter (fax) family"/>
</dbReference>
<dbReference type="iPTMnet" id="Q9Y6G1"/>
<dbReference type="PhosphoSitePlus" id="Q9Y6G1"/>
<dbReference type="BioMuta" id="TMEM14A"/>
<dbReference type="DMDM" id="9910842"/>
<dbReference type="MassIVE" id="Q9Y6G1"/>
<dbReference type="PaxDb" id="9606-ENSP00000211314"/>
<dbReference type="PeptideAtlas" id="Q9Y6G1"/>
<dbReference type="ProteomicsDB" id="86673"/>
<dbReference type="Pumba" id="Q9Y6G1"/>
<dbReference type="TopDownProteomics" id="Q9Y6G1"/>
<dbReference type="Antibodypedia" id="30922">
    <property type="antibodies" value="34 antibodies from 11 providers"/>
</dbReference>
<dbReference type="DNASU" id="28978"/>
<dbReference type="Ensembl" id="ENST00000211314.5">
    <property type="protein sequence ID" value="ENSP00000211314.4"/>
    <property type="gene ID" value="ENSG00000096092.6"/>
</dbReference>
<dbReference type="GeneID" id="28978"/>
<dbReference type="KEGG" id="hsa:28978"/>
<dbReference type="MANE-Select" id="ENST00000211314.5">
    <property type="protein sequence ID" value="ENSP00000211314.4"/>
    <property type="RefSeq nucleotide sequence ID" value="NM_014051.4"/>
    <property type="RefSeq protein sequence ID" value="NP_054770.1"/>
</dbReference>
<dbReference type="UCSC" id="uc003pax.4">
    <property type="organism name" value="human"/>
</dbReference>
<dbReference type="AGR" id="HGNC:21076"/>
<dbReference type="CTD" id="28978"/>
<dbReference type="DisGeNET" id="28978"/>
<dbReference type="GeneCards" id="TMEM14A"/>
<dbReference type="HGNC" id="HGNC:21076">
    <property type="gene designation" value="TMEM14A"/>
</dbReference>
<dbReference type="HPA" id="ENSG00000096092">
    <property type="expression patterns" value="Low tissue specificity"/>
</dbReference>
<dbReference type="neXtProt" id="NX_Q9Y6G1"/>
<dbReference type="OpenTargets" id="ENSG00000096092"/>
<dbReference type="PharmGKB" id="PA134974524"/>
<dbReference type="VEuPathDB" id="HostDB:ENSG00000096092"/>
<dbReference type="eggNOG" id="KOG4267">
    <property type="taxonomic scope" value="Eukaryota"/>
</dbReference>
<dbReference type="GeneTree" id="ENSGT00940000158206"/>
<dbReference type="HOGENOM" id="CLU_096652_4_3_1"/>
<dbReference type="InParanoid" id="Q9Y6G1"/>
<dbReference type="OMA" id="MGTRYKK"/>
<dbReference type="OrthoDB" id="5620at2759"/>
<dbReference type="PAN-GO" id="Q9Y6G1">
    <property type="GO annotations" value="2 GO annotations based on evolutionary models"/>
</dbReference>
<dbReference type="PhylomeDB" id="Q9Y6G1"/>
<dbReference type="TreeFam" id="TF323345"/>
<dbReference type="PathwayCommons" id="Q9Y6G1"/>
<dbReference type="SignaLink" id="Q9Y6G1"/>
<dbReference type="BioGRID-ORCS" id="28978">
    <property type="hits" value="13 hits in 1155 CRISPR screens"/>
</dbReference>
<dbReference type="ChiTaRS" id="TMEM14A">
    <property type="organism name" value="human"/>
</dbReference>
<dbReference type="EvolutionaryTrace" id="Q9Y6G1"/>
<dbReference type="GenomeRNAi" id="28978"/>
<dbReference type="Pharos" id="Q9Y6G1">
    <property type="development level" value="Tbio"/>
</dbReference>
<dbReference type="PRO" id="PR:Q9Y6G1"/>
<dbReference type="Proteomes" id="UP000005640">
    <property type="component" value="Chromosome 6"/>
</dbReference>
<dbReference type="RNAct" id="Q9Y6G1">
    <property type="molecule type" value="protein"/>
</dbReference>
<dbReference type="Bgee" id="ENSG00000096092">
    <property type="expression patterns" value="Expressed in oocyte and 204 other cell types or tissues"/>
</dbReference>
<dbReference type="GO" id="GO:0005789">
    <property type="term" value="C:endoplasmic reticulum membrane"/>
    <property type="evidence" value="ECO:0000314"/>
    <property type="project" value="UniProtKB"/>
</dbReference>
<dbReference type="GO" id="GO:0031966">
    <property type="term" value="C:mitochondrial membrane"/>
    <property type="evidence" value="ECO:0000314"/>
    <property type="project" value="UniProtKB"/>
</dbReference>
<dbReference type="GO" id="GO:0006915">
    <property type="term" value="P:apoptotic process"/>
    <property type="evidence" value="ECO:0007669"/>
    <property type="project" value="UniProtKB-KW"/>
</dbReference>
<dbReference type="GO" id="GO:0043066">
    <property type="term" value="P:negative regulation of apoptotic process"/>
    <property type="evidence" value="ECO:0000315"/>
    <property type="project" value="UniProtKB"/>
</dbReference>
<dbReference type="GO" id="GO:1901029">
    <property type="term" value="P:negative regulation of mitochondrial outer membrane permeabilization involved in apoptotic signaling pathway"/>
    <property type="evidence" value="ECO:0000315"/>
    <property type="project" value="UniProtKB"/>
</dbReference>
<dbReference type="GO" id="GO:0070453">
    <property type="term" value="P:regulation of heme biosynthetic process"/>
    <property type="evidence" value="ECO:0000318"/>
    <property type="project" value="GO_Central"/>
</dbReference>
<dbReference type="FunFam" id="1.10.10.1740:FF:000001">
    <property type="entry name" value="Transmembrane protein 14A"/>
    <property type="match status" value="1"/>
</dbReference>
<dbReference type="Gene3D" id="6.10.250.1330">
    <property type="match status" value="1"/>
</dbReference>
<dbReference type="Gene3D" id="1.10.10.1740">
    <property type="entry name" value="Transmembrane protein 14-like"/>
    <property type="match status" value="1"/>
</dbReference>
<dbReference type="InterPro" id="IPR005349">
    <property type="entry name" value="TMEM14"/>
</dbReference>
<dbReference type="InterPro" id="IPR044890">
    <property type="entry name" value="TMEM14_sf"/>
</dbReference>
<dbReference type="PANTHER" id="PTHR12668">
    <property type="entry name" value="TRANSMEMBRANE PROTEIN 14, 15"/>
    <property type="match status" value="1"/>
</dbReference>
<dbReference type="PANTHER" id="PTHR12668:SF11">
    <property type="entry name" value="TRANSMEMBRANE PROTEIN 14A"/>
    <property type="match status" value="1"/>
</dbReference>
<dbReference type="Pfam" id="PF03647">
    <property type="entry name" value="Tmemb_14"/>
    <property type="match status" value="1"/>
</dbReference>
<name>TM14A_HUMAN</name>
<gene>
    <name type="primary">TMEM14A</name>
    <name type="synonym">C6orf73</name>
    <name type="ORF">PTD011</name>
</gene>
<evidence type="ECO:0000255" key="1"/>
<evidence type="ECO:0000269" key="2">
    <source>
    </source>
</evidence>
<evidence type="ECO:0000269" key="3">
    <source>
    </source>
</evidence>
<evidence type="ECO:0000305" key="4"/>
<evidence type="ECO:0007829" key="5">
    <source>
        <dbReference type="PDB" id="2LOO"/>
    </source>
</evidence>
<evidence type="ECO:0007829" key="6">
    <source>
        <dbReference type="PDB" id="2LOP"/>
    </source>
</evidence>
<sequence length="99" mass="10712">MDLIGFGYAALVTFGSIFGYKRRGGVPSLIAGLFVGCLAGYGAYRVSNDKRDVKVSLFTAFFLATIMGVRFKRSKKIMPAGLVAGLSLMMILRLVLLLL</sequence>
<reference key="1">
    <citation type="submission" date="1998-07" db="EMBL/GenBank/DDBJ databases">
        <authorList>
            <person name="Zhou J."/>
            <person name="Huang Q."/>
            <person name="Song H."/>
            <person name="Peng J."/>
            <person name="Zhang Q."/>
            <person name="Fu G."/>
            <person name="Dai M."/>
            <person name="Mao Y."/>
            <person name="Mao M."/>
            <person name="Chen Z."/>
            <person name="Chen J."/>
        </authorList>
    </citation>
    <scope>NUCLEOTIDE SEQUENCE [MRNA]</scope>
    <source>
        <tissue>Pituitary tumor</tissue>
    </source>
</reference>
<reference key="2">
    <citation type="submission" date="2000-02" db="EMBL/GenBank/DDBJ databases">
        <authorList>
            <person name="Tong X."/>
            <person name="Liu B."/>
            <person name="Sun Z."/>
        </authorList>
    </citation>
    <scope>NUCLEOTIDE SEQUENCE [MRNA]</scope>
    <source>
        <tissue>Fetal brain</tissue>
    </source>
</reference>
<reference key="3">
    <citation type="journal article" date="2004" name="Nat. Genet.">
        <title>Complete sequencing and characterization of 21,243 full-length human cDNAs.</title>
        <authorList>
            <person name="Ota T."/>
            <person name="Suzuki Y."/>
            <person name="Nishikawa T."/>
            <person name="Otsuki T."/>
            <person name="Sugiyama T."/>
            <person name="Irie R."/>
            <person name="Wakamatsu A."/>
            <person name="Hayashi K."/>
            <person name="Sato H."/>
            <person name="Nagai K."/>
            <person name="Kimura K."/>
            <person name="Makita H."/>
            <person name="Sekine M."/>
            <person name="Obayashi M."/>
            <person name="Nishi T."/>
            <person name="Shibahara T."/>
            <person name="Tanaka T."/>
            <person name="Ishii S."/>
            <person name="Yamamoto J."/>
            <person name="Saito K."/>
            <person name="Kawai Y."/>
            <person name="Isono Y."/>
            <person name="Nakamura Y."/>
            <person name="Nagahari K."/>
            <person name="Murakami K."/>
            <person name="Yasuda T."/>
            <person name="Iwayanagi T."/>
            <person name="Wagatsuma M."/>
            <person name="Shiratori A."/>
            <person name="Sudo H."/>
            <person name="Hosoiri T."/>
            <person name="Kaku Y."/>
            <person name="Kodaira H."/>
            <person name="Kondo H."/>
            <person name="Sugawara M."/>
            <person name="Takahashi M."/>
            <person name="Kanda K."/>
            <person name="Yokoi T."/>
            <person name="Furuya T."/>
            <person name="Kikkawa E."/>
            <person name="Omura Y."/>
            <person name="Abe K."/>
            <person name="Kamihara K."/>
            <person name="Katsuta N."/>
            <person name="Sato K."/>
            <person name="Tanikawa M."/>
            <person name="Yamazaki M."/>
            <person name="Ninomiya K."/>
            <person name="Ishibashi T."/>
            <person name="Yamashita H."/>
            <person name="Murakawa K."/>
            <person name="Fujimori K."/>
            <person name="Tanai H."/>
            <person name="Kimata M."/>
            <person name="Watanabe M."/>
            <person name="Hiraoka S."/>
            <person name="Chiba Y."/>
            <person name="Ishida S."/>
            <person name="Ono Y."/>
            <person name="Takiguchi S."/>
            <person name="Watanabe S."/>
            <person name="Yosida M."/>
            <person name="Hotuta T."/>
            <person name="Kusano J."/>
            <person name="Kanehori K."/>
            <person name="Takahashi-Fujii A."/>
            <person name="Hara H."/>
            <person name="Tanase T.-O."/>
            <person name="Nomura Y."/>
            <person name="Togiya S."/>
            <person name="Komai F."/>
            <person name="Hara R."/>
            <person name="Takeuchi K."/>
            <person name="Arita M."/>
            <person name="Imose N."/>
            <person name="Musashino K."/>
            <person name="Yuuki H."/>
            <person name="Oshima A."/>
            <person name="Sasaki N."/>
            <person name="Aotsuka S."/>
            <person name="Yoshikawa Y."/>
            <person name="Matsunawa H."/>
            <person name="Ichihara T."/>
            <person name="Shiohata N."/>
            <person name="Sano S."/>
            <person name="Moriya S."/>
            <person name="Momiyama H."/>
            <person name="Satoh N."/>
            <person name="Takami S."/>
            <person name="Terashima Y."/>
            <person name="Suzuki O."/>
            <person name="Nakagawa S."/>
            <person name="Senoh A."/>
            <person name="Mizoguchi H."/>
            <person name="Goto Y."/>
            <person name="Shimizu F."/>
            <person name="Wakebe H."/>
            <person name="Hishigaki H."/>
            <person name="Watanabe T."/>
            <person name="Sugiyama A."/>
            <person name="Takemoto M."/>
            <person name="Kawakami B."/>
            <person name="Yamazaki M."/>
            <person name="Watanabe K."/>
            <person name="Kumagai A."/>
            <person name="Itakura S."/>
            <person name="Fukuzumi Y."/>
            <person name="Fujimori Y."/>
            <person name="Komiyama M."/>
            <person name="Tashiro H."/>
            <person name="Tanigami A."/>
            <person name="Fujiwara T."/>
            <person name="Ono T."/>
            <person name="Yamada K."/>
            <person name="Fujii Y."/>
            <person name="Ozaki K."/>
            <person name="Hirao M."/>
            <person name="Ohmori Y."/>
            <person name="Kawabata A."/>
            <person name="Hikiji T."/>
            <person name="Kobatake N."/>
            <person name="Inagaki H."/>
            <person name="Ikema Y."/>
            <person name="Okamoto S."/>
            <person name="Okitani R."/>
            <person name="Kawakami T."/>
            <person name="Noguchi S."/>
            <person name="Itoh T."/>
            <person name="Shigeta K."/>
            <person name="Senba T."/>
            <person name="Matsumura K."/>
            <person name="Nakajima Y."/>
            <person name="Mizuno T."/>
            <person name="Morinaga M."/>
            <person name="Sasaki M."/>
            <person name="Togashi T."/>
            <person name="Oyama M."/>
            <person name="Hata H."/>
            <person name="Watanabe M."/>
            <person name="Komatsu T."/>
            <person name="Mizushima-Sugano J."/>
            <person name="Satoh T."/>
            <person name="Shirai Y."/>
            <person name="Takahashi Y."/>
            <person name="Nakagawa K."/>
            <person name="Okumura K."/>
            <person name="Nagase T."/>
            <person name="Nomura N."/>
            <person name="Kikuchi H."/>
            <person name="Masuho Y."/>
            <person name="Yamashita R."/>
            <person name="Nakai K."/>
            <person name="Yada T."/>
            <person name="Nakamura Y."/>
            <person name="Ohara O."/>
            <person name="Isogai T."/>
            <person name="Sugano S."/>
        </authorList>
    </citation>
    <scope>NUCLEOTIDE SEQUENCE [LARGE SCALE MRNA]</scope>
    <source>
        <tissue>Cerebellum</tissue>
    </source>
</reference>
<reference key="4">
    <citation type="journal article" date="2003" name="Nature">
        <title>The DNA sequence and analysis of human chromosome 6.</title>
        <authorList>
            <person name="Mungall A.J."/>
            <person name="Palmer S.A."/>
            <person name="Sims S.K."/>
            <person name="Edwards C.A."/>
            <person name="Ashurst J.L."/>
            <person name="Wilming L."/>
            <person name="Jones M.C."/>
            <person name="Horton R."/>
            <person name="Hunt S.E."/>
            <person name="Scott C.E."/>
            <person name="Gilbert J.G.R."/>
            <person name="Clamp M.E."/>
            <person name="Bethel G."/>
            <person name="Milne S."/>
            <person name="Ainscough R."/>
            <person name="Almeida J.P."/>
            <person name="Ambrose K.D."/>
            <person name="Andrews T.D."/>
            <person name="Ashwell R.I.S."/>
            <person name="Babbage A.K."/>
            <person name="Bagguley C.L."/>
            <person name="Bailey J."/>
            <person name="Banerjee R."/>
            <person name="Barker D.J."/>
            <person name="Barlow K.F."/>
            <person name="Bates K."/>
            <person name="Beare D.M."/>
            <person name="Beasley H."/>
            <person name="Beasley O."/>
            <person name="Bird C.P."/>
            <person name="Blakey S.E."/>
            <person name="Bray-Allen S."/>
            <person name="Brook J."/>
            <person name="Brown A.J."/>
            <person name="Brown J.Y."/>
            <person name="Burford D.C."/>
            <person name="Burrill W."/>
            <person name="Burton J."/>
            <person name="Carder C."/>
            <person name="Carter N.P."/>
            <person name="Chapman J.C."/>
            <person name="Clark S.Y."/>
            <person name="Clark G."/>
            <person name="Clee C.M."/>
            <person name="Clegg S."/>
            <person name="Cobley V."/>
            <person name="Collier R.E."/>
            <person name="Collins J.E."/>
            <person name="Colman L.K."/>
            <person name="Corby N.R."/>
            <person name="Coville G.J."/>
            <person name="Culley K.M."/>
            <person name="Dhami P."/>
            <person name="Davies J."/>
            <person name="Dunn M."/>
            <person name="Earthrowl M.E."/>
            <person name="Ellington A.E."/>
            <person name="Evans K.A."/>
            <person name="Faulkner L."/>
            <person name="Francis M.D."/>
            <person name="Frankish A."/>
            <person name="Frankland J."/>
            <person name="French L."/>
            <person name="Garner P."/>
            <person name="Garnett J."/>
            <person name="Ghori M.J."/>
            <person name="Gilby L.M."/>
            <person name="Gillson C.J."/>
            <person name="Glithero R.J."/>
            <person name="Grafham D.V."/>
            <person name="Grant M."/>
            <person name="Gribble S."/>
            <person name="Griffiths C."/>
            <person name="Griffiths M.N.D."/>
            <person name="Hall R."/>
            <person name="Halls K.S."/>
            <person name="Hammond S."/>
            <person name="Harley J.L."/>
            <person name="Hart E.A."/>
            <person name="Heath P.D."/>
            <person name="Heathcott R."/>
            <person name="Holmes S.J."/>
            <person name="Howden P.J."/>
            <person name="Howe K.L."/>
            <person name="Howell G.R."/>
            <person name="Huckle E."/>
            <person name="Humphray S.J."/>
            <person name="Humphries M.D."/>
            <person name="Hunt A.R."/>
            <person name="Johnson C.M."/>
            <person name="Joy A.A."/>
            <person name="Kay M."/>
            <person name="Keenan S.J."/>
            <person name="Kimberley A.M."/>
            <person name="King A."/>
            <person name="Laird G.K."/>
            <person name="Langford C."/>
            <person name="Lawlor S."/>
            <person name="Leongamornlert D.A."/>
            <person name="Leversha M."/>
            <person name="Lloyd C.R."/>
            <person name="Lloyd D.M."/>
            <person name="Loveland J.E."/>
            <person name="Lovell J."/>
            <person name="Martin S."/>
            <person name="Mashreghi-Mohammadi M."/>
            <person name="Maslen G.L."/>
            <person name="Matthews L."/>
            <person name="McCann O.T."/>
            <person name="McLaren S.J."/>
            <person name="McLay K."/>
            <person name="McMurray A."/>
            <person name="Moore M.J.F."/>
            <person name="Mullikin J.C."/>
            <person name="Niblett D."/>
            <person name="Nickerson T."/>
            <person name="Novik K.L."/>
            <person name="Oliver K."/>
            <person name="Overton-Larty E.K."/>
            <person name="Parker A."/>
            <person name="Patel R."/>
            <person name="Pearce A.V."/>
            <person name="Peck A.I."/>
            <person name="Phillimore B.J.C.T."/>
            <person name="Phillips S."/>
            <person name="Plumb R.W."/>
            <person name="Porter K.M."/>
            <person name="Ramsey Y."/>
            <person name="Ranby S.A."/>
            <person name="Rice C.M."/>
            <person name="Ross M.T."/>
            <person name="Searle S.M."/>
            <person name="Sehra H.K."/>
            <person name="Sheridan E."/>
            <person name="Skuce C.D."/>
            <person name="Smith S."/>
            <person name="Smith M."/>
            <person name="Spraggon L."/>
            <person name="Squares S.L."/>
            <person name="Steward C.A."/>
            <person name="Sycamore N."/>
            <person name="Tamlyn-Hall G."/>
            <person name="Tester J."/>
            <person name="Theaker A.J."/>
            <person name="Thomas D.W."/>
            <person name="Thorpe A."/>
            <person name="Tracey A."/>
            <person name="Tromans A."/>
            <person name="Tubby B."/>
            <person name="Wall M."/>
            <person name="Wallis J.M."/>
            <person name="West A.P."/>
            <person name="White S.S."/>
            <person name="Whitehead S.L."/>
            <person name="Whittaker H."/>
            <person name="Wild A."/>
            <person name="Willey D.J."/>
            <person name="Wilmer T.E."/>
            <person name="Wood J.M."/>
            <person name="Wray P.W."/>
            <person name="Wyatt J.C."/>
            <person name="Young L."/>
            <person name="Younger R.M."/>
            <person name="Bentley D.R."/>
            <person name="Coulson A."/>
            <person name="Durbin R.M."/>
            <person name="Hubbard T."/>
            <person name="Sulston J.E."/>
            <person name="Dunham I."/>
            <person name="Rogers J."/>
            <person name="Beck S."/>
        </authorList>
    </citation>
    <scope>NUCLEOTIDE SEQUENCE [LARGE SCALE GENOMIC DNA]</scope>
</reference>
<reference key="5">
    <citation type="submission" date="2005-07" db="EMBL/GenBank/DDBJ databases">
        <authorList>
            <person name="Mural R.J."/>
            <person name="Istrail S."/>
            <person name="Sutton G.G."/>
            <person name="Florea L."/>
            <person name="Halpern A.L."/>
            <person name="Mobarry C.M."/>
            <person name="Lippert R."/>
            <person name="Walenz B."/>
            <person name="Shatkay H."/>
            <person name="Dew I."/>
            <person name="Miller J.R."/>
            <person name="Flanigan M.J."/>
            <person name="Edwards N.J."/>
            <person name="Bolanos R."/>
            <person name="Fasulo D."/>
            <person name="Halldorsson B.V."/>
            <person name="Hannenhalli S."/>
            <person name="Turner R."/>
            <person name="Yooseph S."/>
            <person name="Lu F."/>
            <person name="Nusskern D.R."/>
            <person name="Shue B.C."/>
            <person name="Zheng X.H."/>
            <person name="Zhong F."/>
            <person name="Delcher A.L."/>
            <person name="Huson D.H."/>
            <person name="Kravitz S.A."/>
            <person name="Mouchard L."/>
            <person name="Reinert K."/>
            <person name="Remington K.A."/>
            <person name="Clark A.G."/>
            <person name="Waterman M.S."/>
            <person name="Eichler E.E."/>
            <person name="Adams M.D."/>
            <person name="Hunkapiller M.W."/>
            <person name="Myers E.W."/>
            <person name="Venter J.C."/>
        </authorList>
    </citation>
    <scope>NUCLEOTIDE SEQUENCE [LARGE SCALE GENOMIC DNA]</scope>
</reference>
<reference key="6">
    <citation type="journal article" date="2004" name="Genome Res.">
        <title>The status, quality, and expansion of the NIH full-length cDNA project: the Mammalian Gene Collection (MGC).</title>
        <authorList>
            <consortium name="The MGC Project Team"/>
        </authorList>
    </citation>
    <scope>NUCLEOTIDE SEQUENCE [LARGE SCALE MRNA]</scope>
    <source>
        <tissue>Lung</tissue>
        <tissue>Urinary bladder</tissue>
    </source>
</reference>
<reference key="7">
    <citation type="journal article" date="2011" name="Cancer Lett.">
        <title>TMEM14A inhibits N-(4-hydroxyphenyl)retinamide-induced apoptosis through the stabilization of mitochondrial membrane potential.</title>
        <authorList>
            <person name="Woo I.S."/>
            <person name="Jin H."/>
            <person name="Kang E.S."/>
            <person name="Kim H.J."/>
            <person name="Lee J.H."/>
            <person name="Chang K.C."/>
            <person name="Park J.Y."/>
            <person name="Choi W.S."/>
            <person name="Seo H.G."/>
        </authorList>
    </citation>
    <scope>FUNCTION</scope>
    <scope>SUBCELLULAR LOCATION</scope>
</reference>
<reference key="8">
    <citation type="journal article" date="2016" name="Biosci. Rep.">
        <title>Knockdown of TMEM14A expression by RNAi inhibits the proliferation and invasion of human ovarian cancer cells.</title>
        <authorList>
            <person name="Zhang Q."/>
            <person name="Chen X."/>
            <person name="Zhang X."/>
            <person name="Zhan J."/>
            <person name="Chen J."/>
        </authorList>
    </citation>
    <scope>TISSUE SPECIFICITY</scope>
</reference>
<reference key="9">
    <citation type="journal article" date="2012" name="Nat. Methods">
        <title>Facile backbone structure determination of human membrane proteins by NMR spectroscopy.</title>
        <authorList>
            <person name="Klammt C."/>
            <person name="Maslennikov I."/>
            <person name="Bayrhuber M."/>
            <person name="Eichmann C."/>
            <person name="Vajpai N."/>
            <person name="Chiu E.J."/>
            <person name="Blain K.Y."/>
            <person name="Esquivies L."/>
            <person name="Kwon J.H."/>
            <person name="Balana B."/>
            <person name="Pieper U."/>
            <person name="Sali A."/>
            <person name="Slesinger P.A."/>
            <person name="Kwiatkowski W."/>
            <person name="Riek R."/>
            <person name="Choe S."/>
        </authorList>
    </citation>
    <scope>STRUCTURE BY NMR</scope>
</reference>
<accession>Q9Y6G1</accession>
<accession>B2R552</accession>